<keyword id="KW-0963">Cytoplasm</keyword>
<keyword id="KW-0396">Initiation factor</keyword>
<keyword id="KW-0648">Protein biosynthesis</keyword>
<keyword id="KW-1185">Reference proteome</keyword>
<keyword id="KW-0694">RNA-binding</keyword>
<keyword id="KW-0699">rRNA-binding</keyword>
<dbReference type="EMBL" id="AM286690">
    <property type="protein sequence ID" value="CAL16734.1"/>
    <property type="molecule type" value="Genomic_DNA"/>
</dbReference>
<dbReference type="RefSeq" id="WP_007149029.1">
    <property type="nucleotide sequence ID" value="NC_008260.1"/>
</dbReference>
<dbReference type="SMR" id="Q0VQ14"/>
<dbReference type="STRING" id="393595.ABO_1286"/>
<dbReference type="KEGG" id="abo:ABO_1286"/>
<dbReference type="eggNOG" id="COG0361">
    <property type="taxonomic scope" value="Bacteria"/>
</dbReference>
<dbReference type="HOGENOM" id="CLU_151267_1_0_6"/>
<dbReference type="OrthoDB" id="9803250at2"/>
<dbReference type="Proteomes" id="UP000008871">
    <property type="component" value="Chromosome"/>
</dbReference>
<dbReference type="GO" id="GO:0005829">
    <property type="term" value="C:cytosol"/>
    <property type="evidence" value="ECO:0007669"/>
    <property type="project" value="TreeGrafter"/>
</dbReference>
<dbReference type="GO" id="GO:0043022">
    <property type="term" value="F:ribosome binding"/>
    <property type="evidence" value="ECO:0007669"/>
    <property type="project" value="UniProtKB-UniRule"/>
</dbReference>
<dbReference type="GO" id="GO:0019843">
    <property type="term" value="F:rRNA binding"/>
    <property type="evidence" value="ECO:0007669"/>
    <property type="project" value="UniProtKB-UniRule"/>
</dbReference>
<dbReference type="GO" id="GO:0003743">
    <property type="term" value="F:translation initiation factor activity"/>
    <property type="evidence" value="ECO:0007669"/>
    <property type="project" value="UniProtKB-UniRule"/>
</dbReference>
<dbReference type="CDD" id="cd04451">
    <property type="entry name" value="S1_IF1"/>
    <property type="match status" value="1"/>
</dbReference>
<dbReference type="FunFam" id="2.40.50.140:FF:000002">
    <property type="entry name" value="Translation initiation factor IF-1"/>
    <property type="match status" value="1"/>
</dbReference>
<dbReference type="Gene3D" id="2.40.50.140">
    <property type="entry name" value="Nucleic acid-binding proteins"/>
    <property type="match status" value="1"/>
</dbReference>
<dbReference type="HAMAP" id="MF_00075">
    <property type="entry name" value="IF_1"/>
    <property type="match status" value="1"/>
</dbReference>
<dbReference type="InterPro" id="IPR012340">
    <property type="entry name" value="NA-bd_OB-fold"/>
</dbReference>
<dbReference type="InterPro" id="IPR006196">
    <property type="entry name" value="RNA-binding_domain_S1_IF1"/>
</dbReference>
<dbReference type="InterPro" id="IPR003029">
    <property type="entry name" value="S1_domain"/>
</dbReference>
<dbReference type="InterPro" id="IPR004368">
    <property type="entry name" value="TIF_IF1"/>
</dbReference>
<dbReference type="NCBIfam" id="TIGR00008">
    <property type="entry name" value="infA"/>
    <property type="match status" value="1"/>
</dbReference>
<dbReference type="PANTHER" id="PTHR33370">
    <property type="entry name" value="TRANSLATION INITIATION FACTOR IF-1, CHLOROPLASTIC"/>
    <property type="match status" value="1"/>
</dbReference>
<dbReference type="PANTHER" id="PTHR33370:SF1">
    <property type="entry name" value="TRANSLATION INITIATION FACTOR IF-1, CHLOROPLASTIC"/>
    <property type="match status" value="1"/>
</dbReference>
<dbReference type="Pfam" id="PF01176">
    <property type="entry name" value="eIF-1a"/>
    <property type="match status" value="1"/>
</dbReference>
<dbReference type="SMART" id="SM00316">
    <property type="entry name" value="S1"/>
    <property type="match status" value="1"/>
</dbReference>
<dbReference type="SUPFAM" id="SSF50249">
    <property type="entry name" value="Nucleic acid-binding proteins"/>
    <property type="match status" value="1"/>
</dbReference>
<dbReference type="PROSITE" id="PS50832">
    <property type="entry name" value="S1_IF1_TYPE"/>
    <property type="match status" value="1"/>
</dbReference>
<evidence type="ECO:0000255" key="1">
    <source>
        <dbReference type="HAMAP-Rule" id="MF_00075"/>
    </source>
</evidence>
<name>IF1_ALCBS</name>
<protein>
    <recommendedName>
        <fullName evidence="1">Translation initiation factor IF-1</fullName>
    </recommendedName>
</protein>
<accession>Q0VQ14</accession>
<sequence>MAKEEQIELEGVIVDTLPNTMFRVKLDNGHVITAHISGKMRKFYIRILTGDRVKVEMSPYDLTKGRITFRMK</sequence>
<feature type="chain" id="PRO_0000263758" description="Translation initiation factor IF-1">
    <location>
        <begin position="1"/>
        <end position="72"/>
    </location>
</feature>
<feature type="domain" description="S1-like" evidence="1">
    <location>
        <begin position="1"/>
        <end position="72"/>
    </location>
</feature>
<reference key="1">
    <citation type="journal article" date="2006" name="Nat. Biotechnol.">
        <title>Genome sequence of the ubiquitous hydrocarbon-degrading marine bacterium Alcanivorax borkumensis.</title>
        <authorList>
            <person name="Schneiker S."/>
            <person name="Martins dos Santos V.A.P."/>
            <person name="Bartels D."/>
            <person name="Bekel T."/>
            <person name="Brecht M."/>
            <person name="Buhrmester J."/>
            <person name="Chernikova T.N."/>
            <person name="Denaro R."/>
            <person name="Ferrer M."/>
            <person name="Gertler C."/>
            <person name="Goesmann A."/>
            <person name="Golyshina O.V."/>
            <person name="Kaminski F."/>
            <person name="Khachane A.N."/>
            <person name="Lang S."/>
            <person name="Linke B."/>
            <person name="McHardy A.C."/>
            <person name="Meyer F."/>
            <person name="Nechitaylo T."/>
            <person name="Puehler A."/>
            <person name="Regenhardt D."/>
            <person name="Rupp O."/>
            <person name="Sabirova J.S."/>
            <person name="Selbitschka W."/>
            <person name="Yakimov M.M."/>
            <person name="Timmis K.N."/>
            <person name="Vorhoelter F.-J."/>
            <person name="Weidner S."/>
            <person name="Kaiser O."/>
            <person name="Golyshin P.N."/>
        </authorList>
    </citation>
    <scope>NUCLEOTIDE SEQUENCE [LARGE SCALE GENOMIC DNA]</scope>
    <source>
        <strain>ATCC 700651 / DSM 11573 / NCIMB 13689 / SK2</strain>
    </source>
</reference>
<gene>
    <name evidence="1" type="primary">infA</name>
    <name type="ordered locus">ABO_1286</name>
</gene>
<proteinExistence type="inferred from homology"/>
<comment type="function">
    <text evidence="1">One of the essential components for the initiation of protein synthesis. Stabilizes the binding of IF-2 and IF-3 on the 30S subunit to which N-formylmethionyl-tRNA(fMet) subsequently binds. Helps modulate mRNA selection, yielding the 30S pre-initiation complex (PIC). Upon addition of the 50S ribosomal subunit IF-1, IF-2 and IF-3 are released leaving the mature 70S translation initiation complex.</text>
</comment>
<comment type="subunit">
    <text evidence="1">Component of the 30S ribosomal translation pre-initiation complex which assembles on the 30S ribosome in the order IF-2 and IF-3, IF-1 and N-formylmethionyl-tRNA(fMet); mRNA recruitment can occur at any time during PIC assembly.</text>
</comment>
<comment type="subcellular location">
    <subcellularLocation>
        <location evidence="1">Cytoplasm</location>
    </subcellularLocation>
</comment>
<comment type="similarity">
    <text evidence="1">Belongs to the IF-1 family.</text>
</comment>
<organism>
    <name type="scientific">Alcanivorax borkumensis (strain ATCC 700651 / DSM 11573 / NCIMB 13689 / SK2)</name>
    <dbReference type="NCBI Taxonomy" id="393595"/>
    <lineage>
        <taxon>Bacteria</taxon>
        <taxon>Pseudomonadati</taxon>
        <taxon>Pseudomonadota</taxon>
        <taxon>Gammaproteobacteria</taxon>
        <taxon>Oceanospirillales</taxon>
        <taxon>Alcanivoracaceae</taxon>
        <taxon>Alcanivorax</taxon>
    </lineage>
</organism>